<evidence type="ECO:0000255" key="1">
    <source>
        <dbReference type="HAMAP-Rule" id="MF_00805"/>
    </source>
</evidence>
<organism>
    <name type="scientific">Edwardsiella ictaluri (strain 93-146)</name>
    <dbReference type="NCBI Taxonomy" id="634503"/>
    <lineage>
        <taxon>Bacteria</taxon>
        <taxon>Pseudomonadati</taxon>
        <taxon>Pseudomonadota</taxon>
        <taxon>Gammaproteobacteria</taxon>
        <taxon>Enterobacterales</taxon>
        <taxon>Hafniaceae</taxon>
        <taxon>Edwardsiella</taxon>
    </lineage>
</organism>
<feature type="chain" id="PRO_1000213002" description="Citrate lyase acyl carrier protein">
    <location>
        <begin position="1"/>
        <end position="99"/>
    </location>
</feature>
<feature type="modified residue" description="O-(phosphoribosyl dephospho-coenzyme A)serine" evidence="1">
    <location>
        <position position="14"/>
    </location>
</feature>
<proteinExistence type="inferred from homology"/>
<reference key="1">
    <citation type="submission" date="2009-03" db="EMBL/GenBank/DDBJ databases">
        <title>Complete genome sequence of Edwardsiella ictaluri 93-146.</title>
        <authorList>
            <person name="Williams M.L."/>
            <person name="Gillaspy A.F."/>
            <person name="Dyer D.W."/>
            <person name="Thune R.L."/>
            <person name="Waldbieser G.C."/>
            <person name="Schuster S.C."/>
            <person name="Gipson J."/>
            <person name="Zaitshik J."/>
            <person name="Landry C."/>
            <person name="Lawrence M.L."/>
        </authorList>
    </citation>
    <scope>NUCLEOTIDE SEQUENCE [LARGE SCALE GENOMIC DNA]</scope>
    <source>
        <strain>93-146</strain>
    </source>
</reference>
<accession>C5B714</accession>
<sequence length="99" mass="10858">MKINHAAVAGTLESSDVMVRIAPIEDDQALDLQISSSVEKQFGDAIRATVLDVLNRYQVRGIQLIVDDKGALDCVLRARLETLLARAADLVSLPWEDRA</sequence>
<comment type="function">
    <text evidence="1">Covalent carrier of the coenzyme of citrate lyase.</text>
</comment>
<comment type="subunit">
    <text evidence="1">Oligomer with a subunit composition of (alpha,beta,gamma)6.</text>
</comment>
<comment type="subcellular location">
    <subcellularLocation>
        <location evidence="1">Cytoplasm</location>
    </subcellularLocation>
</comment>
<comment type="similarity">
    <text evidence="1">Belongs to the CitD family.</text>
</comment>
<protein>
    <recommendedName>
        <fullName evidence="1">Citrate lyase acyl carrier protein</fullName>
    </recommendedName>
    <alternativeName>
        <fullName evidence="1">Citrate lyase gamma chain</fullName>
    </alternativeName>
</protein>
<gene>
    <name evidence="1" type="primary">citD</name>
    <name type="ordered locus">NT01EI_0233</name>
</gene>
<dbReference type="EMBL" id="CP001600">
    <property type="protein sequence ID" value="ACR67476.1"/>
    <property type="molecule type" value="Genomic_DNA"/>
</dbReference>
<dbReference type="RefSeq" id="WP_015869685.1">
    <property type="nucleotide sequence ID" value="NZ_CP169062.1"/>
</dbReference>
<dbReference type="SMR" id="C5B714"/>
<dbReference type="STRING" id="67780.B6E78_12285"/>
<dbReference type="GeneID" id="69537333"/>
<dbReference type="KEGG" id="eic:NT01EI_0233"/>
<dbReference type="PATRIC" id="fig|634503.3.peg.209"/>
<dbReference type="HOGENOM" id="CLU_158489_0_0_6"/>
<dbReference type="OrthoDB" id="9798736at2"/>
<dbReference type="Proteomes" id="UP000001485">
    <property type="component" value="Chromosome"/>
</dbReference>
<dbReference type="GO" id="GO:0005737">
    <property type="term" value="C:cytoplasm"/>
    <property type="evidence" value="ECO:0007669"/>
    <property type="project" value="UniProtKB-SubCell"/>
</dbReference>
<dbReference type="HAMAP" id="MF_00805">
    <property type="entry name" value="CitD"/>
    <property type="match status" value="1"/>
</dbReference>
<dbReference type="InterPro" id="IPR006495">
    <property type="entry name" value="CitD"/>
</dbReference>
<dbReference type="InterPro" id="IPR023439">
    <property type="entry name" value="Mal_deCO2ase/Cit_lyase_ACP"/>
</dbReference>
<dbReference type="NCBIfam" id="TIGR01608">
    <property type="entry name" value="citD"/>
    <property type="match status" value="1"/>
</dbReference>
<dbReference type="NCBIfam" id="NF009726">
    <property type="entry name" value="PRK13253.1"/>
    <property type="match status" value="1"/>
</dbReference>
<dbReference type="Pfam" id="PF06857">
    <property type="entry name" value="ACP"/>
    <property type="match status" value="1"/>
</dbReference>
<dbReference type="PIRSF" id="PIRSF002736">
    <property type="entry name" value="Citrt_lyas_gamma"/>
    <property type="match status" value="1"/>
</dbReference>
<keyword id="KW-0963">Cytoplasm</keyword>
<keyword id="KW-0597">Phosphoprotein</keyword>
<name>CITD_EDWI9</name>